<keyword id="KW-0597">Phosphoprotein</keyword>
<keyword id="KW-1185">Reference proteome</keyword>
<organism>
    <name type="scientific">Mus musculus</name>
    <name type="common">Mouse</name>
    <dbReference type="NCBI Taxonomy" id="10090"/>
    <lineage>
        <taxon>Eukaryota</taxon>
        <taxon>Metazoa</taxon>
        <taxon>Chordata</taxon>
        <taxon>Craniata</taxon>
        <taxon>Vertebrata</taxon>
        <taxon>Euteleostomi</taxon>
        <taxon>Mammalia</taxon>
        <taxon>Eutheria</taxon>
        <taxon>Euarchontoglires</taxon>
        <taxon>Glires</taxon>
        <taxon>Rodentia</taxon>
        <taxon>Myomorpha</taxon>
        <taxon>Muroidea</taxon>
        <taxon>Muridae</taxon>
        <taxon>Murinae</taxon>
        <taxon>Mus</taxon>
        <taxon>Mus</taxon>
    </lineage>
</organism>
<reference key="1">
    <citation type="submission" date="2001-09" db="EMBL/GenBank/DDBJ databases">
        <authorList>
            <person name="Wang M."/>
            <person name="Futamura M."/>
            <person name="Zhang Z."/>
            <person name="Wang Y."/>
            <person name="You M."/>
        </authorList>
    </citation>
    <scope>NUCLEOTIDE SEQUENCE [MRNA]</scope>
</reference>
<reference key="2">
    <citation type="journal article" date="2004" name="Genome Res.">
        <title>The status, quality, and expansion of the NIH full-length cDNA project: the Mammalian Gene Collection (MGC).</title>
        <authorList>
            <consortium name="The MGC Project Team"/>
        </authorList>
    </citation>
    <scope>NUCLEOTIDE SEQUENCE [LARGE SCALE MRNA]</scope>
</reference>
<reference key="3">
    <citation type="journal article" date="2005" name="Science">
        <title>The transcriptional landscape of the mammalian genome.</title>
        <authorList>
            <person name="Carninci P."/>
            <person name="Kasukawa T."/>
            <person name="Katayama S."/>
            <person name="Gough J."/>
            <person name="Frith M.C."/>
            <person name="Maeda N."/>
            <person name="Oyama R."/>
            <person name="Ravasi T."/>
            <person name="Lenhard B."/>
            <person name="Wells C."/>
            <person name="Kodzius R."/>
            <person name="Shimokawa K."/>
            <person name="Bajic V.B."/>
            <person name="Brenner S.E."/>
            <person name="Batalov S."/>
            <person name="Forrest A.R."/>
            <person name="Zavolan M."/>
            <person name="Davis M.J."/>
            <person name="Wilming L.G."/>
            <person name="Aidinis V."/>
            <person name="Allen J.E."/>
            <person name="Ambesi-Impiombato A."/>
            <person name="Apweiler R."/>
            <person name="Aturaliya R.N."/>
            <person name="Bailey T.L."/>
            <person name="Bansal M."/>
            <person name="Baxter L."/>
            <person name="Beisel K.W."/>
            <person name="Bersano T."/>
            <person name="Bono H."/>
            <person name="Chalk A.M."/>
            <person name="Chiu K.P."/>
            <person name="Choudhary V."/>
            <person name="Christoffels A."/>
            <person name="Clutterbuck D.R."/>
            <person name="Crowe M.L."/>
            <person name="Dalla E."/>
            <person name="Dalrymple B.P."/>
            <person name="de Bono B."/>
            <person name="Della Gatta G."/>
            <person name="di Bernardo D."/>
            <person name="Down T."/>
            <person name="Engstrom P."/>
            <person name="Fagiolini M."/>
            <person name="Faulkner G."/>
            <person name="Fletcher C.F."/>
            <person name="Fukushima T."/>
            <person name="Furuno M."/>
            <person name="Futaki S."/>
            <person name="Gariboldi M."/>
            <person name="Georgii-Hemming P."/>
            <person name="Gingeras T.R."/>
            <person name="Gojobori T."/>
            <person name="Green R.E."/>
            <person name="Gustincich S."/>
            <person name="Harbers M."/>
            <person name="Hayashi Y."/>
            <person name="Hensch T.K."/>
            <person name="Hirokawa N."/>
            <person name="Hill D."/>
            <person name="Huminiecki L."/>
            <person name="Iacono M."/>
            <person name="Ikeo K."/>
            <person name="Iwama A."/>
            <person name="Ishikawa T."/>
            <person name="Jakt M."/>
            <person name="Kanapin A."/>
            <person name="Katoh M."/>
            <person name="Kawasawa Y."/>
            <person name="Kelso J."/>
            <person name="Kitamura H."/>
            <person name="Kitano H."/>
            <person name="Kollias G."/>
            <person name="Krishnan S.P."/>
            <person name="Kruger A."/>
            <person name="Kummerfeld S.K."/>
            <person name="Kurochkin I.V."/>
            <person name="Lareau L.F."/>
            <person name="Lazarevic D."/>
            <person name="Lipovich L."/>
            <person name="Liu J."/>
            <person name="Liuni S."/>
            <person name="McWilliam S."/>
            <person name="Madan Babu M."/>
            <person name="Madera M."/>
            <person name="Marchionni L."/>
            <person name="Matsuda H."/>
            <person name="Matsuzawa S."/>
            <person name="Miki H."/>
            <person name="Mignone F."/>
            <person name="Miyake S."/>
            <person name="Morris K."/>
            <person name="Mottagui-Tabar S."/>
            <person name="Mulder N."/>
            <person name="Nakano N."/>
            <person name="Nakauchi H."/>
            <person name="Ng P."/>
            <person name="Nilsson R."/>
            <person name="Nishiguchi S."/>
            <person name="Nishikawa S."/>
            <person name="Nori F."/>
            <person name="Ohara O."/>
            <person name="Okazaki Y."/>
            <person name="Orlando V."/>
            <person name="Pang K.C."/>
            <person name="Pavan W.J."/>
            <person name="Pavesi G."/>
            <person name="Pesole G."/>
            <person name="Petrovsky N."/>
            <person name="Piazza S."/>
            <person name="Reed J."/>
            <person name="Reid J.F."/>
            <person name="Ring B.Z."/>
            <person name="Ringwald M."/>
            <person name="Rost B."/>
            <person name="Ruan Y."/>
            <person name="Salzberg S.L."/>
            <person name="Sandelin A."/>
            <person name="Schneider C."/>
            <person name="Schoenbach C."/>
            <person name="Sekiguchi K."/>
            <person name="Semple C.A."/>
            <person name="Seno S."/>
            <person name="Sessa L."/>
            <person name="Sheng Y."/>
            <person name="Shibata Y."/>
            <person name="Shimada H."/>
            <person name="Shimada K."/>
            <person name="Silva D."/>
            <person name="Sinclair B."/>
            <person name="Sperling S."/>
            <person name="Stupka E."/>
            <person name="Sugiura K."/>
            <person name="Sultana R."/>
            <person name="Takenaka Y."/>
            <person name="Taki K."/>
            <person name="Tammoja K."/>
            <person name="Tan S.L."/>
            <person name="Tang S."/>
            <person name="Taylor M.S."/>
            <person name="Tegner J."/>
            <person name="Teichmann S.A."/>
            <person name="Ueda H.R."/>
            <person name="van Nimwegen E."/>
            <person name="Verardo R."/>
            <person name="Wei C.L."/>
            <person name="Yagi K."/>
            <person name="Yamanishi H."/>
            <person name="Zabarovsky E."/>
            <person name="Zhu S."/>
            <person name="Zimmer A."/>
            <person name="Hide W."/>
            <person name="Bult C."/>
            <person name="Grimmond S.M."/>
            <person name="Teasdale R.D."/>
            <person name="Liu E.T."/>
            <person name="Brusic V."/>
            <person name="Quackenbush J."/>
            <person name="Wahlestedt C."/>
            <person name="Mattick J.S."/>
            <person name="Hume D.A."/>
            <person name="Kai C."/>
            <person name="Sasaki D."/>
            <person name="Tomaru Y."/>
            <person name="Fukuda S."/>
            <person name="Kanamori-Katayama M."/>
            <person name="Suzuki M."/>
            <person name="Aoki J."/>
            <person name="Arakawa T."/>
            <person name="Iida J."/>
            <person name="Imamura K."/>
            <person name="Itoh M."/>
            <person name="Kato T."/>
            <person name="Kawaji H."/>
            <person name="Kawagashira N."/>
            <person name="Kawashima T."/>
            <person name="Kojima M."/>
            <person name="Kondo S."/>
            <person name="Konno H."/>
            <person name="Nakano K."/>
            <person name="Ninomiya N."/>
            <person name="Nishio T."/>
            <person name="Okada M."/>
            <person name="Plessy C."/>
            <person name="Shibata K."/>
            <person name="Shiraki T."/>
            <person name="Suzuki S."/>
            <person name="Tagami M."/>
            <person name="Waki K."/>
            <person name="Watahiki A."/>
            <person name="Okamura-Oho Y."/>
            <person name="Suzuki H."/>
            <person name="Kawai J."/>
            <person name="Hayashizaki Y."/>
        </authorList>
    </citation>
    <scope>NUCLEOTIDE SEQUENCE [LARGE SCALE MRNA] OF 173-419</scope>
    <source>
        <strain>C57BL/6J</strain>
        <tissue>Intestine</tissue>
        <tissue>Medulla oblongata</tissue>
    </source>
</reference>
<feature type="chain" id="PRO_0000089841" description="Ras association domain-containing protein 8">
    <location>
        <begin position="1"/>
        <end position="419"/>
    </location>
</feature>
<feature type="domain" description="Ras-associating" evidence="2">
    <location>
        <begin position="1"/>
        <end position="82"/>
    </location>
</feature>
<feature type="region of interest" description="Disordered" evidence="3">
    <location>
        <begin position="372"/>
        <end position="399"/>
    </location>
</feature>
<feature type="compositionally biased region" description="Polar residues" evidence="3">
    <location>
        <begin position="382"/>
        <end position="399"/>
    </location>
</feature>
<feature type="modified residue" description="Phosphoserine" evidence="1">
    <location>
        <position position="105"/>
    </location>
</feature>
<feature type="modified residue" description="Phosphoserine" evidence="1">
    <location>
        <position position="129"/>
    </location>
</feature>
<feature type="modified residue" description="Phosphothreonine" evidence="1">
    <location>
        <position position="131"/>
    </location>
</feature>
<feature type="modified residue" description="Phosphoserine" evidence="1">
    <location>
        <position position="387"/>
    </location>
</feature>
<feature type="sequence conflict" description="In Ref. 3; BAB30637." evidence="4" ref="3">
    <original>Q</original>
    <variation>E</variation>
    <location>
        <position position="173"/>
    </location>
</feature>
<dbReference type="EMBL" id="AF424737">
    <property type="protein sequence ID" value="AAN28310.1"/>
    <property type="molecule type" value="mRNA"/>
</dbReference>
<dbReference type="EMBL" id="BC115779">
    <property type="protein sequence ID" value="AAI15780.1"/>
    <property type="molecule type" value="mRNA"/>
</dbReference>
<dbReference type="EMBL" id="BC117546">
    <property type="protein sequence ID" value="AAI17547.1"/>
    <property type="molecule type" value="mRNA"/>
</dbReference>
<dbReference type="EMBL" id="AK017214">
    <property type="protein sequence ID" value="BAB30637.1"/>
    <property type="molecule type" value="mRNA"/>
</dbReference>
<dbReference type="EMBL" id="AK031980">
    <property type="protein sequence ID" value="BAC27637.1"/>
    <property type="molecule type" value="mRNA"/>
</dbReference>
<dbReference type="CCDS" id="CCDS20696.1"/>
<dbReference type="RefSeq" id="NP_082036.1">
    <property type="nucleotide sequence ID" value="NM_027760.3"/>
</dbReference>
<dbReference type="RefSeq" id="XP_011239900.1">
    <property type="nucleotide sequence ID" value="XM_011241598.1"/>
</dbReference>
<dbReference type="RefSeq" id="XP_011239901.1">
    <property type="nucleotide sequence ID" value="XM_011241599.3"/>
</dbReference>
<dbReference type="RefSeq" id="XP_011239902.1">
    <property type="nucleotide sequence ID" value="XM_011241600.2"/>
</dbReference>
<dbReference type="RefSeq" id="XP_036008200.1">
    <property type="nucleotide sequence ID" value="XM_036152307.1"/>
</dbReference>
<dbReference type="SMR" id="Q8CJ96"/>
<dbReference type="BioGRID" id="214636">
    <property type="interactions" value="3"/>
</dbReference>
<dbReference type="FunCoup" id="Q8CJ96">
    <property type="interactions" value="1848"/>
</dbReference>
<dbReference type="STRING" id="10090.ENSMUSP00000107333"/>
<dbReference type="iPTMnet" id="Q8CJ96"/>
<dbReference type="PhosphoSitePlus" id="Q8CJ96"/>
<dbReference type="PaxDb" id="10090-ENSMUSP00000107333"/>
<dbReference type="PeptideAtlas" id="Q8CJ96"/>
<dbReference type="ProteomicsDB" id="253174"/>
<dbReference type="Pumba" id="Q8CJ96"/>
<dbReference type="Antibodypedia" id="24278">
    <property type="antibodies" value="368 antibodies from 31 providers"/>
</dbReference>
<dbReference type="DNASU" id="71323"/>
<dbReference type="Ensembl" id="ENSMUST00000032388.5">
    <property type="protein sequence ID" value="ENSMUSP00000032388.5"/>
    <property type="gene ID" value="ENSMUSG00000030259.13"/>
</dbReference>
<dbReference type="Ensembl" id="ENSMUST00000111704.8">
    <property type="protein sequence ID" value="ENSMUSP00000107333.2"/>
    <property type="gene ID" value="ENSMUSG00000030259.13"/>
</dbReference>
<dbReference type="GeneID" id="71323"/>
<dbReference type="KEGG" id="mmu:71323"/>
<dbReference type="UCSC" id="uc009err.1">
    <property type="organism name" value="mouse"/>
</dbReference>
<dbReference type="AGR" id="MGI:1918573"/>
<dbReference type="CTD" id="11228"/>
<dbReference type="MGI" id="MGI:1918573">
    <property type="gene designation" value="Rassf8"/>
</dbReference>
<dbReference type="VEuPathDB" id="HostDB:ENSMUSG00000030259"/>
<dbReference type="eggNOG" id="KOG1574">
    <property type="taxonomic scope" value="Eukaryota"/>
</dbReference>
<dbReference type="GeneTree" id="ENSGT00950000182839"/>
<dbReference type="HOGENOM" id="CLU_031151_0_0_1"/>
<dbReference type="InParanoid" id="Q8CJ96"/>
<dbReference type="OMA" id="VEIRYWE"/>
<dbReference type="OrthoDB" id="10051571at2759"/>
<dbReference type="PhylomeDB" id="Q8CJ96"/>
<dbReference type="TreeFam" id="TF318385"/>
<dbReference type="BioGRID-ORCS" id="71323">
    <property type="hits" value="3 hits in 78 CRISPR screens"/>
</dbReference>
<dbReference type="PRO" id="PR:Q8CJ96"/>
<dbReference type="Proteomes" id="UP000000589">
    <property type="component" value="Chromosome 6"/>
</dbReference>
<dbReference type="RNAct" id="Q8CJ96">
    <property type="molecule type" value="protein"/>
</dbReference>
<dbReference type="Bgee" id="ENSMUSG00000030259">
    <property type="expression patterns" value="Expressed in gastrula and 246 other cell types or tissues"/>
</dbReference>
<dbReference type="ExpressionAtlas" id="Q8CJ96">
    <property type="expression patterns" value="baseline and differential"/>
</dbReference>
<dbReference type="GO" id="GO:0007165">
    <property type="term" value="P:signal transduction"/>
    <property type="evidence" value="ECO:0007669"/>
    <property type="project" value="InterPro"/>
</dbReference>
<dbReference type="CDD" id="cd16134">
    <property type="entry name" value="RA_RASSF8"/>
    <property type="match status" value="1"/>
</dbReference>
<dbReference type="Gene3D" id="3.10.20.90">
    <property type="entry name" value="Phosphatidylinositol 3-kinase Catalytic Subunit, Chain A, domain 1"/>
    <property type="match status" value="1"/>
</dbReference>
<dbReference type="InterPro" id="IPR033593">
    <property type="entry name" value="N-RASSF"/>
</dbReference>
<dbReference type="InterPro" id="IPR000159">
    <property type="entry name" value="RA_dom"/>
</dbReference>
<dbReference type="InterPro" id="IPR048945">
    <property type="entry name" value="RASSF8/10_RA"/>
</dbReference>
<dbReference type="InterPro" id="IPR048944">
    <property type="entry name" value="RASSF8_RA"/>
</dbReference>
<dbReference type="InterPro" id="IPR029071">
    <property type="entry name" value="Ubiquitin-like_domsf"/>
</dbReference>
<dbReference type="PANTHER" id="PTHR15286:SF9">
    <property type="entry name" value="RAS ASSOCIATION DOMAIN-CONTAINING PROTEIN 8"/>
    <property type="match status" value="1"/>
</dbReference>
<dbReference type="PANTHER" id="PTHR15286">
    <property type="entry name" value="RAS-ASSOCIATING DOMAIN CONTAINING PROTEIN"/>
    <property type="match status" value="1"/>
</dbReference>
<dbReference type="Pfam" id="PF21712">
    <property type="entry name" value="RASSF8-10_RA"/>
    <property type="match status" value="1"/>
</dbReference>
<dbReference type="SMART" id="SM00314">
    <property type="entry name" value="RA"/>
    <property type="match status" value="1"/>
</dbReference>
<dbReference type="SUPFAM" id="SSF54236">
    <property type="entry name" value="Ubiquitin-like"/>
    <property type="match status" value="1"/>
</dbReference>
<dbReference type="PROSITE" id="PS50200">
    <property type="entry name" value="RA"/>
    <property type="match status" value="1"/>
</dbReference>
<gene>
    <name type="primary">Rassf8</name>
</gene>
<proteinExistence type="evidence at transcript level"/>
<protein>
    <recommendedName>
        <fullName>Ras association domain-containing protein 8</fullName>
    </recommendedName>
    <alternativeName>
        <fullName>Carcinoma-associated protein HOJ-1 homolog</fullName>
    </alternativeName>
</protein>
<accession>Q8CJ96</accession>
<accession>Q149Q5</accession>
<accession>Q8CCW4</accession>
<accession>Q9CU91</accession>
<name>RASF8_MOUSE</name>
<evidence type="ECO:0000250" key="1">
    <source>
        <dbReference type="UniProtKB" id="Q8NHQ8"/>
    </source>
</evidence>
<evidence type="ECO:0000255" key="2">
    <source>
        <dbReference type="PROSITE-ProRule" id="PRU00166"/>
    </source>
</evidence>
<evidence type="ECO:0000256" key="3">
    <source>
        <dbReference type="SAM" id="MobiDB-lite"/>
    </source>
</evidence>
<evidence type="ECO:0000305" key="4"/>
<sequence length="419" mass="48103">MELKVWVDGVQRIVCGVTEVTTCQEVVIALAQAIGRTGRYTLIEKWRDTERHLAPHENPIVSLNKWGQYASDVQLILRRTGPSLSERPTSDSVARIPERTLYRQSLPPLAKLRPQADKSIRRREPKRKSLTFTGGAKGLTDIFGKGKETEFRQKVLSNCRATAEELKRLIRLQTGKLQAIEKQLESSEAEIRFWEQKYSCSLEEEIVRLEQRIKRNDVEIEEEEFWENELQIEQENEKQLQDQLEEIRQKVTDCEGRLKDYLAQIHTMESGLQAEKLHREVQEAQVNEEEVKGKIEKVKGEMDLQGQQSLRLENGIRAVERSLGQATKRLQDKEQELEQLTKELRQVNLQQFIQQTGTKVTVLPAEPTEIEASQADIETEAPFQSGSLKRPGSSRQLPSNLRILQNPVSSGFNPEGIYV</sequence>